<comment type="function">
    <text evidence="1">RuBisCO catalyzes two reactions: the carboxylation of D-ribulose 1,5-bisphosphate, the primary event in carbon dioxide fixation, as well as the oxidative fragmentation of the pentose substrate. Both reactions occur simultaneously and in competition at the same active site. Although the small subunit is not catalytic it is essential for maximal activity.</text>
</comment>
<comment type="subunit">
    <text evidence="1">Heterohexadecamer of 8 large and 8 small subunits.</text>
</comment>
<comment type="subcellular location">
    <subcellularLocation>
        <location evidence="1">Plastid</location>
        <location evidence="1">Chloroplast</location>
    </subcellularLocation>
</comment>
<comment type="miscellaneous">
    <text evidence="1">The basic functional RuBisCO is composed of a large chain homodimer in a 'head-to-tail' conformation. In form I RuBisCO this homodimer is arranged in a barrel-like tetramer with the small subunits forming a tetrameric 'cap' on each end of the 'barrel'.</text>
</comment>
<comment type="similarity">
    <text evidence="1">Belongs to the RuBisCO small chain family.</text>
</comment>
<name>RBS1_AMAHP</name>
<reference key="1">
    <citation type="submission" date="1995-05" db="EMBL/GenBank/DDBJ databases">
        <authorList>
            <person name="Villegas-Sepulveda N."/>
            <person name="Jofre y Garfias A."/>
            <person name="Jimenez-Moraila B."/>
            <person name="Herrera-Estrella A."/>
            <person name="Simpson J."/>
        </authorList>
    </citation>
    <scope>NUCLEOTIDE SEQUENCE [MRNA]</scope>
    <source>
        <strain>Aztec race</strain>
        <tissue>Leaf</tissue>
    </source>
</reference>
<reference key="2">
    <citation type="online journal article" date="1999" name="Plant Gene Register">
        <title>Three RbcS cDNAs from the C4 dicotyledonous plant Amaranthus hypochondriacus.</title>
        <authorList>
            <person name="Corey A.C."/>
            <person name="Dempsey D.A."/>
            <person name="Klessig D.F."/>
            <person name="Berry J.O."/>
        </authorList>
        <locator>PGR99-101</locator>
    </citation>
    <scope>NUCLEOTIDE SEQUENCE [MRNA]</scope>
    <source>
        <strain>R103</strain>
    </source>
</reference>
<evidence type="ECO:0000255" key="1">
    <source>
        <dbReference type="HAMAP-Rule" id="MF_00860"/>
    </source>
</evidence>
<dbReference type="EMBL" id="X87171">
    <property type="protein sequence ID" value="CAA60636.1"/>
    <property type="molecule type" value="mRNA"/>
</dbReference>
<dbReference type="EMBL" id="AF150665">
    <property type="protein sequence ID" value="AAD37438.1"/>
    <property type="molecule type" value="mRNA"/>
</dbReference>
<dbReference type="PIR" id="S54818">
    <property type="entry name" value="S54818"/>
</dbReference>
<dbReference type="SMR" id="Q42516"/>
<dbReference type="GO" id="GO:0009507">
    <property type="term" value="C:chloroplast"/>
    <property type="evidence" value="ECO:0007669"/>
    <property type="project" value="UniProtKB-SubCell"/>
</dbReference>
<dbReference type="GO" id="GO:0016984">
    <property type="term" value="F:ribulose-bisphosphate carboxylase activity"/>
    <property type="evidence" value="ECO:0007669"/>
    <property type="project" value="UniProtKB-UniRule"/>
</dbReference>
<dbReference type="GO" id="GO:0009853">
    <property type="term" value="P:photorespiration"/>
    <property type="evidence" value="ECO:0007669"/>
    <property type="project" value="UniProtKB-KW"/>
</dbReference>
<dbReference type="GO" id="GO:0019253">
    <property type="term" value="P:reductive pentose-phosphate cycle"/>
    <property type="evidence" value="ECO:0007669"/>
    <property type="project" value="UniProtKB-UniRule"/>
</dbReference>
<dbReference type="CDD" id="cd03527">
    <property type="entry name" value="RuBisCO_small"/>
    <property type="match status" value="1"/>
</dbReference>
<dbReference type="FunFam" id="3.30.190.10:FF:000001">
    <property type="entry name" value="Ribulose bisphosphate carboxylase small chain, chloroplastic"/>
    <property type="match status" value="1"/>
</dbReference>
<dbReference type="Gene3D" id="3.30.190.10">
    <property type="entry name" value="Ribulose bisphosphate carboxylase, small subunit"/>
    <property type="match status" value="1"/>
</dbReference>
<dbReference type="HAMAP" id="MF_00859">
    <property type="entry name" value="RuBisCO_S_bact"/>
    <property type="match status" value="1"/>
</dbReference>
<dbReference type="InterPro" id="IPR024681">
    <property type="entry name" value="RuBisCO_ssu"/>
</dbReference>
<dbReference type="InterPro" id="IPR000894">
    <property type="entry name" value="RuBisCO_ssu_dom"/>
</dbReference>
<dbReference type="InterPro" id="IPR024680">
    <property type="entry name" value="RuBisCO_ssu_N"/>
</dbReference>
<dbReference type="InterPro" id="IPR036385">
    <property type="entry name" value="RuBisCO_ssu_sf"/>
</dbReference>
<dbReference type="PANTHER" id="PTHR31262">
    <property type="entry name" value="RIBULOSE BISPHOSPHATE CARBOXYLASE SMALL CHAIN 1, CHLOROPLASTIC"/>
    <property type="match status" value="1"/>
</dbReference>
<dbReference type="PANTHER" id="PTHR31262:SF10">
    <property type="entry name" value="RIBULOSE BISPHOSPHATE CARBOXYLASE SMALL SUBUNIT 1A, CHLOROPLASTIC-RELATED"/>
    <property type="match status" value="1"/>
</dbReference>
<dbReference type="Pfam" id="PF12338">
    <property type="entry name" value="RbcS"/>
    <property type="match status" value="1"/>
</dbReference>
<dbReference type="Pfam" id="PF00101">
    <property type="entry name" value="RuBisCO_small"/>
    <property type="match status" value="1"/>
</dbReference>
<dbReference type="PRINTS" id="PR00152">
    <property type="entry name" value="RUBISCOSMALL"/>
</dbReference>
<dbReference type="SMART" id="SM00961">
    <property type="entry name" value="RuBisCO_small"/>
    <property type="match status" value="1"/>
</dbReference>
<dbReference type="SUPFAM" id="SSF55239">
    <property type="entry name" value="RuBisCO, small subunit"/>
    <property type="match status" value="1"/>
</dbReference>
<proteinExistence type="evidence at transcript level"/>
<protein>
    <recommendedName>
        <fullName evidence="1">Ribulose bisphosphate carboxylase small subunit, chloroplastic 1</fullName>
        <shortName evidence="1">RuBisCO small subunit 1</shortName>
    </recommendedName>
</protein>
<accession>Q42516</accession>
<gene>
    <name evidence="1" type="primary">RBCS1</name>
    <name type="synonym">RBCS</name>
</gene>
<feature type="transit peptide" description="Chloroplast" evidence="1">
    <location>
        <begin position="1"/>
        <end position="58"/>
    </location>
</feature>
<feature type="chain" id="PRO_0000031460" description="Ribulose bisphosphate carboxylase small subunit, chloroplastic 1" evidence="1">
    <location>
        <begin position="59"/>
        <end position="183"/>
    </location>
</feature>
<organism>
    <name type="scientific">Amaranthus hypochondriacus</name>
    <name type="common">Prince-of-Wales feather</name>
    <name type="synonym">Amaranthus hybridus var. hypochondriacus</name>
    <dbReference type="NCBI Taxonomy" id="28502"/>
    <lineage>
        <taxon>Eukaryota</taxon>
        <taxon>Viridiplantae</taxon>
        <taxon>Streptophyta</taxon>
        <taxon>Embryophyta</taxon>
        <taxon>Tracheophyta</taxon>
        <taxon>Spermatophyta</taxon>
        <taxon>Magnoliopsida</taxon>
        <taxon>eudicotyledons</taxon>
        <taxon>Gunneridae</taxon>
        <taxon>Pentapetalae</taxon>
        <taxon>Caryophyllales</taxon>
        <taxon>Amaranthaceae</taxon>
        <taxon>Amaranthus</taxon>
    </lineage>
</organism>
<keyword id="KW-0113">Calvin cycle</keyword>
<keyword id="KW-0120">Carbon dioxide fixation</keyword>
<keyword id="KW-0150">Chloroplast</keyword>
<keyword id="KW-0601">Photorespiration</keyword>
<keyword id="KW-0602">Photosynthesis</keyword>
<keyword id="KW-0934">Plastid</keyword>
<keyword id="KW-0809">Transit peptide</keyword>
<sequence>MASSMLSNAAMATTAATAGAQASMVAPFNGLKSFATFPITKKSSNDFSSLPSNGGRVQCMQVWPPVGKKKFETLSYLPPLSDAQLLAQVQYLLNKGWIPCIEFELEHPFVYRENHRSPGYQDGRYWTMWKLPMYGCTDPAQVLNEVEEAKKAYPSAFIRIIGFDNKRQVQCVSFIAYKPAGGL</sequence>